<sequence length="182" mass="19593">MADSENQGPAEPSQAAAAAEAAAEEVMAEGGAQGGDCDSAAGDPDSAAGQMAEEPQTPAENAPKPKNDFIESLPNSVKCRVLALKKLQKRCDKIEAKFDKEFQALEKKYNDIYKPLLAKIQELTGEMEGCAWTLEGEEEEEEEYEDDEEEGEDEEEEEAAAEAAAGAKHDDAHAEMPDDAKK</sequence>
<name>NP1L5_HUMAN</name>
<evidence type="ECO:0000255" key="1"/>
<evidence type="ECO:0000256" key="2">
    <source>
        <dbReference type="SAM" id="MobiDB-lite"/>
    </source>
</evidence>
<evidence type="ECO:0000269" key="3">
    <source>
    </source>
</evidence>
<evidence type="ECO:0000305" key="4"/>
<protein>
    <recommendedName>
        <fullName>Nucleosome assembly protein 1-like 5</fullName>
    </recommendedName>
    <alternativeName>
        <fullName>Down-regulated in liver malignancy</fullName>
    </alternativeName>
</protein>
<comment type="interaction">
    <interactant intactId="EBI-713627">
        <id>Q96NT1</id>
    </interactant>
    <interactant intactId="EBI-492498">
        <id>P18848</id>
        <label>ATF4</label>
    </interactant>
    <organismsDiffer>false</organismsDiffer>
    <experiments>3</experiments>
</comment>
<comment type="interaction">
    <interactant intactId="EBI-713627">
        <id>Q96NT1</id>
    </interactant>
    <interactant intactId="EBI-3911716">
        <id>Q9ULW6</id>
        <label>NAP1L2</label>
    </interactant>
    <organismsDiffer>false</organismsDiffer>
    <experiments>5</experiments>
</comment>
<comment type="interaction">
    <interactant intactId="EBI-713627">
        <id>Q96NT1</id>
    </interactant>
    <interactant intactId="EBI-1053651">
        <id>P08579</id>
        <label>SNRPB2</label>
    </interactant>
    <organismsDiffer>false</organismsDiffer>
    <experiments>3</experiments>
</comment>
<comment type="interaction">
    <interactant intactId="EBI-713627">
        <id>Q96NT1</id>
    </interactant>
    <interactant intactId="EBI-11958386">
        <id>Q6PIF2</id>
        <label>SYCE2</label>
    </interactant>
    <organismsDiffer>false</organismsDiffer>
    <experiments>5</experiments>
</comment>
<comment type="subcellular location">
    <subcellularLocation>
        <location evidence="4">Nucleus</location>
    </subcellularLocation>
</comment>
<comment type="tissue specificity">
    <text evidence="3">Predominantly expressed in brain.</text>
</comment>
<comment type="similarity">
    <text evidence="4">Belongs to the nucleosome assembly protein (NAP) family.</text>
</comment>
<dbReference type="EMBL" id="AK054689">
    <property type="protein sequence ID" value="BAB70793.1"/>
    <property type="molecule type" value="mRNA"/>
</dbReference>
<dbReference type="EMBL" id="CH471057">
    <property type="protein sequence ID" value="EAX06025.1"/>
    <property type="molecule type" value="Genomic_DNA"/>
</dbReference>
<dbReference type="EMBL" id="BC104883">
    <property type="protein sequence ID" value="AAI04884.1"/>
    <property type="molecule type" value="mRNA"/>
</dbReference>
<dbReference type="CCDS" id="CCDS3632.1"/>
<dbReference type="RefSeq" id="NP_715638.1">
    <property type="nucleotide sequence ID" value="NM_153757.4"/>
</dbReference>
<dbReference type="SMR" id="Q96NT1"/>
<dbReference type="BioGRID" id="129344">
    <property type="interactions" value="75"/>
</dbReference>
<dbReference type="FunCoup" id="Q96NT1">
    <property type="interactions" value="37"/>
</dbReference>
<dbReference type="IntAct" id="Q96NT1">
    <property type="interactions" value="34"/>
</dbReference>
<dbReference type="MINT" id="Q96NT1"/>
<dbReference type="STRING" id="9606.ENSP00000320488"/>
<dbReference type="iPTMnet" id="Q96NT1"/>
<dbReference type="PhosphoSitePlus" id="Q96NT1"/>
<dbReference type="BioMuta" id="NAP1L5"/>
<dbReference type="DMDM" id="74732635"/>
<dbReference type="jPOST" id="Q96NT1"/>
<dbReference type="MassIVE" id="Q96NT1"/>
<dbReference type="PaxDb" id="9606-ENSP00000320488"/>
<dbReference type="PeptideAtlas" id="Q96NT1"/>
<dbReference type="ProteomicsDB" id="77554"/>
<dbReference type="Pumba" id="Q96NT1"/>
<dbReference type="Antibodypedia" id="25656">
    <property type="antibodies" value="97 antibodies from 25 providers"/>
</dbReference>
<dbReference type="DNASU" id="266812"/>
<dbReference type="Ensembl" id="ENST00000323061.7">
    <property type="protein sequence ID" value="ENSP00000320488.5"/>
    <property type="gene ID" value="ENSG00000177432.8"/>
</dbReference>
<dbReference type="GeneID" id="266812"/>
<dbReference type="KEGG" id="hsa:266812"/>
<dbReference type="MANE-Select" id="ENST00000323061.7">
    <property type="protein sequence ID" value="ENSP00000320488.5"/>
    <property type="RefSeq nucleotide sequence ID" value="NM_153757.4"/>
    <property type="RefSeq protein sequence ID" value="NP_715638.1"/>
</dbReference>
<dbReference type="UCSC" id="uc003hrx.4">
    <property type="organism name" value="human"/>
</dbReference>
<dbReference type="AGR" id="HGNC:19968"/>
<dbReference type="CTD" id="266812"/>
<dbReference type="DisGeNET" id="266812"/>
<dbReference type="GeneCards" id="NAP1L5"/>
<dbReference type="HGNC" id="HGNC:19968">
    <property type="gene designation" value="NAP1L5"/>
</dbReference>
<dbReference type="HPA" id="ENSG00000177432">
    <property type="expression patterns" value="Tissue enhanced (brain)"/>
</dbReference>
<dbReference type="MIM" id="612203">
    <property type="type" value="gene"/>
</dbReference>
<dbReference type="neXtProt" id="NX_Q96NT1"/>
<dbReference type="OpenTargets" id="ENSG00000177432"/>
<dbReference type="PharmGKB" id="PA134921404"/>
<dbReference type="VEuPathDB" id="HostDB:ENSG00000177432"/>
<dbReference type="eggNOG" id="KOG1507">
    <property type="taxonomic scope" value="Eukaryota"/>
</dbReference>
<dbReference type="GeneTree" id="ENSGT00730000111564"/>
<dbReference type="HOGENOM" id="CLU_133891_0_0_1"/>
<dbReference type="InParanoid" id="Q96NT1"/>
<dbReference type="OMA" id="ATKPKND"/>
<dbReference type="OrthoDB" id="27325at2759"/>
<dbReference type="PAN-GO" id="Q96NT1">
    <property type="GO annotations" value="4 GO annotations based on evolutionary models"/>
</dbReference>
<dbReference type="PhylomeDB" id="Q96NT1"/>
<dbReference type="PathwayCommons" id="Q96NT1"/>
<dbReference type="SignaLink" id="Q96NT1"/>
<dbReference type="BioGRID-ORCS" id="266812">
    <property type="hits" value="13 hits in 1156 CRISPR screens"/>
</dbReference>
<dbReference type="ChiTaRS" id="NAP1L5">
    <property type="organism name" value="human"/>
</dbReference>
<dbReference type="GenomeRNAi" id="266812"/>
<dbReference type="Pharos" id="Q96NT1">
    <property type="development level" value="Tbio"/>
</dbReference>
<dbReference type="PRO" id="PR:Q96NT1"/>
<dbReference type="Proteomes" id="UP000005640">
    <property type="component" value="Chromosome 4"/>
</dbReference>
<dbReference type="RNAct" id="Q96NT1">
    <property type="molecule type" value="protein"/>
</dbReference>
<dbReference type="Bgee" id="ENSG00000177432">
    <property type="expression patterns" value="Expressed in endothelial cell and 190 other cell types or tissues"/>
</dbReference>
<dbReference type="GO" id="GO:0005634">
    <property type="term" value="C:nucleus"/>
    <property type="evidence" value="ECO:0007669"/>
    <property type="project" value="UniProtKB-SubCell"/>
</dbReference>
<dbReference type="GO" id="GO:0006334">
    <property type="term" value="P:nucleosome assembly"/>
    <property type="evidence" value="ECO:0007669"/>
    <property type="project" value="InterPro"/>
</dbReference>
<dbReference type="FunFam" id="1.20.5.1500:FF:000001">
    <property type="entry name" value="Nucleosome assembly protein 1-like 1"/>
    <property type="match status" value="1"/>
</dbReference>
<dbReference type="Gene3D" id="1.20.5.1500">
    <property type="match status" value="1"/>
</dbReference>
<dbReference type="InterPro" id="IPR037231">
    <property type="entry name" value="NAP-like_sf"/>
</dbReference>
<dbReference type="InterPro" id="IPR002164">
    <property type="entry name" value="NAP_family"/>
</dbReference>
<dbReference type="PANTHER" id="PTHR11875">
    <property type="entry name" value="TESTIS-SPECIFIC Y-ENCODED PROTEIN"/>
    <property type="match status" value="1"/>
</dbReference>
<dbReference type="Pfam" id="PF00956">
    <property type="entry name" value="NAP"/>
    <property type="match status" value="1"/>
</dbReference>
<dbReference type="SUPFAM" id="SSF143113">
    <property type="entry name" value="NAP-like"/>
    <property type="match status" value="1"/>
</dbReference>
<feature type="chain" id="PRO_0000317142" description="Nucleosome assembly protein 1-like 5">
    <location>
        <begin position="1"/>
        <end position="182"/>
    </location>
</feature>
<feature type="region of interest" description="Disordered" evidence="2">
    <location>
        <begin position="1"/>
        <end position="71"/>
    </location>
</feature>
<feature type="region of interest" description="Disordered" evidence="2">
    <location>
        <begin position="134"/>
        <end position="182"/>
    </location>
</feature>
<feature type="coiled-coil region" evidence="1">
    <location>
        <begin position="81"/>
        <end position="107"/>
    </location>
</feature>
<feature type="compositionally biased region" description="Low complexity" evidence="2">
    <location>
        <begin position="7"/>
        <end position="21"/>
    </location>
</feature>
<feature type="compositionally biased region" description="Low complexity" evidence="2">
    <location>
        <begin position="28"/>
        <end position="49"/>
    </location>
</feature>
<feature type="compositionally biased region" description="Acidic residues" evidence="2">
    <location>
        <begin position="135"/>
        <end position="160"/>
    </location>
</feature>
<feature type="compositionally biased region" description="Basic and acidic residues" evidence="2">
    <location>
        <begin position="167"/>
        <end position="182"/>
    </location>
</feature>
<feature type="sequence variant" id="VAR_050227" description="In dbSNP:rs13109442.">
    <original>E</original>
    <variation>Q</variation>
    <location>
        <position position="154"/>
    </location>
</feature>
<gene>
    <name type="primary">NAP1L5</name>
    <name type="synonym">DRLM</name>
</gene>
<accession>Q96NT1</accession>
<keyword id="KW-0175">Coiled coil</keyword>
<keyword id="KW-0539">Nucleus</keyword>
<keyword id="KW-1267">Proteomics identification</keyword>
<keyword id="KW-1185">Reference proteome</keyword>
<organism>
    <name type="scientific">Homo sapiens</name>
    <name type="common">Human</name>
    <dbReference type="NCBI Taxonomy" id="9606"/>
    <lineage>
        <taxon>Eukaryota</taxon>
        <taxon>Metazoa</taxon>
        <taxon>Chordata</taxon>
        <taxon>Craniata</taxon>
        <taxon>Vertebrata</taxon>
        <taxon>Euteleostomi</taxon>
        <taxon>Mammalia</taxon>
        <taxon>Eutheria</taxon>
        <taxon>Euarchontoglires</taxon>
        <taxon>Primates</taxon>
        <taxon>Haplorrhini</taxon>
        <taxon>Catarrhini</taxon>
        <taxon>Hominidae</taxon>
        <taxon>Homo</taxon>
    </lineage>
</organism>
<proteinExistence type="evidence at protein level"/>
<reference key="1">
    <citation type="journal article" date="2004" name="Nat. Genet.">
        <title>Complete sequencing and characterization of 21,243 full-length human cDNAs.</title>
        <authorList>
            <person name="Ota T."/>
            <person name="Suzuki Y."/>
            <person name="Nishikawa T."/>
            <person name="Otsuki T."/>
            <person name="Sugiyama T."/>
            <person name="Irie R."/>
            <person name="Wakamatsu A."/>
            <person name="Hayashi K."/>
            <person name="Sato H."/>
            <person name="Nagai K."/>
            <person name="Kimura K."/>
            <person name="Makita H."/>
            <person name="Sekine M."/>
            <person name="Obayashi M."/>
            <person name="Nishi T."/>
            <person name="Shibahara T."/>
            <person name="Tanaka T."/>
            <person name="Ishii S."/>
            <person name="Yamamoto J."/>
            <person name="Saito K."/>
            <person name="Kawai Y."/>
            <person name="Isono Y."/>
            <person name="Nakamura Y."/>
            <person name="Nagahari K."/>
            <person name="Murakami K."/>
            <person name="Yasuda T."/>
            <person name="Iwayanagi T."/>
            <person name="Wagatsuma M."/>
            <person name="Shiratori A."/>
            <person name="Sudo H."/>
            <person name="Hosoiri T."/>
            <person name="Kaku Y."/>
            <person name="Kodaira H."/>
            <person name="Kondo H."/>
            <person name="Sugawara M."/>
            <person name="Takahashi M."/>
            <person name="Kanda K."/>
            <person name="Yokoi T."/>
            <person name="Furuya T."/>
            <person name="Kikkawa E."/>
            <person name="Omura Y."/>
            <person name="Abe K."/>
            <person name="Kamihara K."/>
            <person name="Katsuta N."/>
            <person name="Sato K."/>
            <person name="Tanikawa M."/>
            <person name="Yamazaki M."/>
            <person name="Ninomiya K."/>
            <person name="Ishibashi T."/>
            <person name="Yamashita H."/>
            <person name="Murakawa K."/>
            <person name="Fujimori K."/>
            <person name="Tanai H."/>
            <person name="Kimata M."/>
            <person name="Watanabe M."/>
            <person name="Hiraoka S."/>
            <person name="Chiba Y."/>
            <person name="Ishida S."/>
            <person name="Ono Y."/>
            <person name="Takiguchi S."/>
            <person name="Watanabe S."/>
            <person name="Yosida M."/>
            <person name="Hotuta T."/>
            <person name="Kusano J."/>
            <person name="Kanehori K."/>
            <person name="Takahashi-Fujii A."/>
            <person name="Hara H."/>
            <person name="Tanase T.-O."/>
            <person name="Nomura Y."/>
            <person name="Togiya S."/>
            <person name="Komai F."/>
            <person name="Hara R."/>
            <person name="Takeuchi K."/>
            <person name="Arita M."/>
            <person name="Imose N."/>
            <person name="Musashino K."/>
            <person name="Yuuki H."/>
            <person name="Oshima A."/>
            <person name="Sasaki N."/>
            <person name="Aotsuka S."/>
            <person name="Yoshikawa Y."/>
            <person name="Matsunawa H."/>
            <person name="Ichihara T."/>
            <person name="Shiohata N."/>
            <person name="Sano S."/>
            <person name="Moriya S."/>
            <person name="Momiyama H."/>
            <person name="Satoh N."/>
            <person name="Takami S."/>
            <person name="Terashima Y."/>
            <person name="Suzuki O."/>
            <person name="Nakagawa S."/>
            <person name="Senoh A."/>
            <person name="Mizoguchi H."/>
            <person name="Goto Y."/>
            <person name="Shimizu F."/>
            <person name="Wakebe H."/>
            <person name="Hishigaki H."/>
            <person name="Watanabe T."/>
            <person name="Sugiyama A."/>
            <person name="Takemoto M."/>
            <person name="Kawakami B."/>
            <person name="Yamazaki M."/>
            <person name="Watanabe K."/>
            <person name="Kumagai A."/>
            <person name="Itakura S."/>
            <person name="Fukuzumi Y."/>
            <person name="Fujimori Y."/>
            <person name="Komiyama M."/>
            <person name="Tashiro H."/>
            <person name="Tanigami A."/>
            <person name="Fujiwara T."/>
            <person name="Ono T."/>
            <person name="Yamada K."/>
            <person name="Fujii Y."/>
            <person name="Ozaki K."/>
            <person name="Hirao M."/>
            <person name="Ohmori Y."/>
            <person name="Kawabata A."/>
            <person name="Hikiji T."/>
            <person name="Kobatake N."/>
            <person name="Inagaki H."/>
            <person name="Ikema Y."/>
            <person name="Okamoto S."/>
            <person name="Okitani R."/>
            <person name="Kawakami T."/>
            <person name="Noguchi S."/>
            <person name="Itoh T."/>
            <person name="Shigeta K."/>
            <person name="Senba T."/>
            <person name="Matsumura K."/>
            <person name="Nakajima Y."/>
            <person name="Mizuno T."/>
            <person name="Morinaga M."/>
            <person name="Sasaki M."/>
            <person name="Togashi T."/>
            <person name="Oyama M."/>
            <person name="Hata H."/>
            <person name="Watanabe M."/>
            <person name="Komatsu T."/>
            <person name="Mizushima-Sugano J."/>
            <person name="Satoh T."/>
            <person name="Shirai Y."/>
            <person name="Takahashi Y."/>
            <person name="Nakagawa K."/>
            <person name="Okumura K."/>
            <person name="Nagase T."/>
            <person name="Nomura N."/>
            <person name="Kikuchi H."/>
            <person name="Masuho Y."/>
            <person name="Yamashita R."/>
            <person name="Nakai K."/>
            <person name="Yada T."/>
            <person name="Nakamura Y."/>
            <person name="Ohara O."/>
            <person name="Isogai T."/>
            <person name="Sugano S."/>
        </authorList>
    </citation>
    <scope>NUCLEOTIDE SEQUENCE [LARGE SCALE MRNA]</scope>
    <source>
        <tissue>Cerebellum</tissue>
    </source>
</reference>
<reference key="2">
    <citation type="submission" date="2005-07" db="EMBL/GenBank/DDBJ databases">
        <authorList>
            <person name="Mural R.J."/>
            <person name="Istrail S."/>
            <person name="Sutton G.G."/>
            <person name="Florea L."/>
            <person name="Halpern A.L."/>
            <person name="Mobarry C.M."/>
            <person name="Lippert R."/>
            <person name="Walenz B."/>
            <person name="Shatkay H."/>
            <person name="Dew I."/>
            <person name="Miller J.R."/>
            <person name="Flanigan M.J."/>
            <person name="Edwards N.J."/>
            <person name="Bolanos R."/>
            <person name="Fasulo D."/>
            <person name="Halldorsson B.V."/>
            <person name="Hannenhalli S."/>
            <person name="Turner R."/>
            <person name="Yooseph S."/>
            <person name="Lu F."/>
            <person name="Nusskern D.R."/>
            <person name="Shue B.C."/>
            <person name="Zheng X.H."/>
            <person name="Zhong F."/>
            <person name="Delcher A.L."/>
            <person name="Huson D.H."/>
            <person name="Kravitz S.A."/>
            <person name="Mouchard L."/>
            <person name="Reinert K."/>
            <person name="Remington K.A."/>
            <person name="Clark A.G."/>
            <person name="Waterman M.S."/>
            <person name="Eichler E.E."/>
            <person name="Adams M.D."/>
            <person name="Hunkapiller M.W."/>
            <person name="Myers E.W."/>
            <person name="Venter J.C."/>
        </authorList>
    </citation>
    <scope>NUCLEOTIDE SEQUENCE [LARGE SCALE GENOMIC DNA]</scope>
</reference>
<reference key="3">
    <citation type="journal article" date="2004" name="Genome Res.">
        <title>The status, quality, and expansion of the NIH full-length cDNA project: the Mammalian Gene Collection (MGC).</title>
        <authorList>
            <consortium name="The MGC Project Team"/>
        </authorList>
    </citation>
    <scope>NUCLEOTIDE SEQUENCE [LARGE SCALE MRNA]</scope>
    <source>
        <tissue>Brain</tissue>
    </source>
</reference>
<reference key="4">
    <citation type="journal article" date="2002" name="Gene">
        <title>Down-regulation of a novel gene, DRLM, in human liver malignancy from 4q22 that encodes a NAP-like protein.</title>
        <authorList>
            <person name="Harada H."/>
            <person name="Nagai H."/>
            <person name="Ezura Y."/>
            <person name="Yokota T."/>
            <person name="Ohsawa I."/>
            <person name="Yamaguchi K."/>
            <person name="Ohue C."/>
            <person name="Tsuneizumi M."/>
            <person name="Mikami I."/>
            <person name="Terada Y."/>
            <person name="Yabe A."/>
            <person name="Emi M."/>
        </authorList>
    </citation>
    <scope>TISSUE SPECIFICITY</scope>
</reference>